<sequence>MIDRYKHQQLRIGSVSPQQISAWATKILPNGEIVGEVTKPYTFHYKTNKPEKDGLFCERIFGPIKSGICACGNYRVIGDEKEDPKFCEQCGVEFVDSRIRRYQMGYIKLACPVTHVWYLKRLPSYIANLLDKPLKELEGLVYCDFSFARPITKKPTFLRLRGLFEYEIQSWKYSIPLFFTTQGFDTFRNREISTGAGAIREQLADLDLRIIIENSLVEWEELGEEGHTGNEWEDRKVGRRKDFLVRRVELAKHFIRTNIEPEWMVLCLLPVLPPELRPIIQIDGGKLMSSDINELYRRVIYRNNTLTDLLTTSRSTPGELVMCQEKLVQEAVDTLLDNGIRGQPMRDGHNKVYKSFSDVIEGKEGRFRETLLGKRVDYSGRSVIVVGPSLSLHRCGLPREIAIELFQTFVIRGLIRQHLASNIGVAKSKIREKEPIVWEILQEVMQGHPVLLNRAPTLHRLGIQAFQPVLVEGRAICLHPLVCKGFNADFDGDQMAVHVPLSLEAQVEARLLMFSHMNLLSPAIGDPISVPTQDMLIGLYVLTSGNRRGICVNRYNPCNRRNYQNQKRSDNSYYKYTKEPFFSNSYDAIGAYRQKRINLDSPLWLRWRLDQRVIASRETPIEVHYESLGTFYEIYGHYLIVRSLKKQILFIYIRTTVGHIALYREIEEAIQGFSRAYSYGT</sequence>
<name>RPOC1_ATRBE</name>
<evidence type="ECO:0000255" key="1">
    <source>
        <dbReference type="HAMAP-Rule" id="MF_01323"/>
    </source>
</evidence>
<evidence type="ECO:0000305" key="2"/>
<organism>
    <name type="scientific">Atropa belladonna</name>
    <name type="common">Belladonna</name>
    <name type="synonym">Deadly nightshade</name>
    <dbReference type="NCBI Taxonomy" id="33113"/>
    <lineage>
        <taxon>Eukaryota</taxon>
        <taxon>Viridiplantae</taxon>
        <taxon>Streptophyta</taxon>
        <taxon>Embryophyta</taxon>
        <taxon>Tracheophyta</taxon>
        <taxon>Spermatophyta</taxon>
        <taxon>Magnoliopsida</taxon>
        <taxon>eudicotyledons</taxon>
        <taxon>Gunneridae</taxon>
        <taxon>Pentapetalae</taxon>
        <taxon>asterids</taxon>
        <taxon>lamiids</taxon>
        <taxon>Solanales</taxon>
        <taxon>Solanaceae</taxon>
        <taxon>Solanoideae</taxon>
        <taxon>Hyoscyameae</taxon>
        <taxon>Atropa</taxon>
    </lineage>
</organism>
<accession>Q8S8Y0</accession>
<comment type="function">
    <text evidence="1">DNA-dependent RNA polymerase catalyzes the transcription of DNA into RNA using the four ribonucleoside triphosphates as substrates.</text>
</comment>
<comment type="catalytic activity">
    <reaction evidence="1">
        <text>RNA(n) + a ribonucleoside 5'-triphosphate = RNA(n+1) + diphosphate</text>
        <dbReference type="Rhea" id="RHEA:21248"/>
        <dbReference type="Rhea" id="RHEA-COMP:14527"/>
        <dbReference type="Rhea" id="RHEA-COMP:17342"/>
        <dbReference type="ChEBI" id="CHEBI:33019"/>
        <dbReference type="ChEBI" id="CHEBI:61557"/>
        <dbReference type="ChEBI" id="CHEBI:140395"/>
        <dbReference type="EC" id="2.7.7.6"/>
    </reaction>
</comment>
<comment type="cofactor">
    <cofactor evidence="1">
        <name>Mg(2+)</name>
        <dbReference type="ChEBI" id="CHEBI:18420"/>
    </cofactor>
    <text evidence="1">Binds 1 Mg(2+) ion per subunit.</text>
</comment>
<comment type="cofactor">
    <cofactor evidence="1">
        <name>Zn(2+)</name>
        <dbReference type="ChEBI" id="CHEBI:29105"/>
    </cofactor>
    <text evidence="1">Binds 1 Zn(2+) ion per subunit.</text>
</comment>
<comment type="subunit">
    <text evidence="1">In plastids the minimal PEP RNA polymerase catalytic core is composed of four subunits: alpha, beta, beta', and beta''. When a (nuclear-encoded) sigma factor is associated with the core the holoenzyme is formed, which can initiate transcription.</text>
</comment>
<comment type="subcellular location">
    <subcellularLocation>
        <location evidence="1">Plastid</location>
        <location evidence="1">Chloroplast</location>
    </subcellularLocation>
</comment>
<comment type="similarity">
    <text evidence="1">Belongs to the RNA polymerase beta' chain family. RpoC1 subfamily.</text>
</comment>
<comment type="sequence caution" evidence="2">
    <conflict type="erroneous initiation">
        <sequence resource="EMBL-CDS" id="CAC88035"/>
    </conflict>
    <text>Extended N-terminus.</text>
</comment>
<dbReference type="EC" id="2.7.7.6" evidence="1"/>
<dbReference type="EMBL" id="AJ316582">
    <property type="protein sequence ID" value="CAC88035.1"/>
    <property type="status" value="ALT_INIT"/>
    <property type="molecule type" value="Genomic_DNA"/>
</dbReference>
<dbReference type="RefSeq" id="NP_783223.2">
    <property type="nucleotide sequence ID" value="NC_004561.1"/>
</dbReference>
<dbReference type="SMR" id="Q8S8Y0"/>
<dbReference type="GeneID" id="806508"/>
<dbReference type="GO" id="GO:0009507">
    <property type="term" value="C:chloroplast"/>
    <property type="evidence" value="ECO:0007669"/>
    <property type="project" value="UniProtKB-SubCell"/>
</dbReference>
<dbReference type="GO" id="GO:0000428">
    <property type="term" value="C:DNA-directed RNA polymerase complex"/>
    <property type="evidence" value="ECO:0007669"/>
    <property type="project" value="UniProtKB-KW"/>
</dbReference>
<dbReference type="GO" id="GO:0005739">
    <property type="term" value="C:mitochondrion"/>
    <property type="evidence" value="ECO:0007669"/>
    <property type="project" value="GOC"/>
</dbReference>
<dbReference type="GO" id="GO:0003677">
    <property type="term" value="F:DNA binding"/>
    <property type="evidence" value="ECO:0007669"/>
    <property type="project" value="UniProtKB-UniRule"/>
</dbReference>
<dbReference type="GO" id="GO:0003899">
    <property type="term" value="F:DNA-directed RNA polymerase activity"/>
    <property type="evidence" value="ECO:0007669"/>
    <property type="project" value="UniProtKB-UniRule"/>
</dbReference>
<dbReference type="GO" id="GO:0000287">
    <property type="term" value="F:magnesium ion binding"/>
    <property type="evidence" value="ECO:0007669"/>
    <property type="project" value="UniProtKB-UniRule"/>
</dbReference>
<dbReference type="GO" id="GO:0008270">
    <property type="term" value="F:zinc ion binding"/>
    <property type="evidence" value="ECO:0007669"/>
    <property type="project" value="UniProtKB-UniRule"/>
</dbReference>
<dbReference type="GO" id="GO:0006351">
    <property type="term" value="P:DNA-templated transcription"/>
    <property type="evidence" value="ECO:0007669"/>
    <property type="project" value="UniProtKB-UniRule"/>
</dbReference>
<dbReference type="FunFam" id="1.10.40.90:FF:000002">
    <property type="entry name" value="DNA-directed RNA polymerase subunit"/>
    <property type="match status" value="1"/>
</dbReference>
<dbReference type="FunFam" id="4.10.860.120:FF:000007">
    <property type="entry name" value="DNA-directed RNA polymerase subunit gamma"/>
    <property type="match status" value="1"/>
</dbReference>
<dbReference type="Gene3D" id="1.10.40.90">
    <property type="match status" value="1"/>
</dbReference>
<dbReference type="Gene3D" id="2.40.40.20">
    <property type="match status" value="1"/>
</dbReference>
<dbReference type="Gene3D" id="4.10.860.120">
    <property type="entry name" value="RNA polymerase II, clamp domain"/>
    <property type="match status" value="1"/>
</dbReference>
<dbReference type="Gene3D" id="1.10.274.100">
    <property type="entry name" value="RNA polymerase Rpb1, domain 3"/>
    <property type="match status" value="1"/>
</dbReference>
<dbReference type="HAMAP" id="MF_01323">
    <property type="entry name" value="RNApol_bact_RpoC1"/>
    <property type="match status" value="1"/>
</dbReference>
<dbReference type="InterPro" id="IPR045867">
    <property type="entry name" value="DNA-dir_RpoC_beta_prime"/>
</dbReference>
<dbReference type="InterPro" id="IPR000722">
    <property type="entry name" value="RNA_pol_asu"/>
</dbReference>
<dbReference type="InterPro" id="IPR006592">
    <property type="entry name" value="RNA_pol_N"/>
</dbReference>
<dbReference type="InterPro" id="IPR007080">
    <property type="entry name" value="RNA_pol_Rpb1_1"/>
</dbReference>
<dbReference type="InterPro" id="IPR042102">
    <property type="entry name" value="RNA_pol_Rpb1_3_sf"/>
</dbReference>
<dbReference type="InterPro" id="IPR044893">
    <property type="entry name" value="RNA_pol_Rpb1_clamp_domain"/>
</dbReference>
<dbReference type="InterPro" id="IPR034678">
    <property type="entry name" value="RNApol_RpoC1"/>
</dbReference>
<dbReference type="PANTHER" id="PTHR19376">
    <property type="entry name" value="DNA-DIRECTED RNA POLYMERASE"/>
    <property type="match status" value="1"/>
</dbReference>
<dbReference type="PANTHER" id="PTHR19376:SF54">
    <property type="entry name" value="DNA-DIRECTED RNA POLYMERASE SUBUNIT BETA"/>
    <property type="match status" value="1"/>
</dbReference>
<dbReference type="Pfam" id="PF04997">
    <property type="entry name" value="RNA_pol_Rpb1_1"/>
    <property type="match status" value="1"/>
</dbReference>
<dbReference type="Pfam" id="PF00623">
    <property type="entry name" value="RNA_pol_Rpb1_2"/>
    <property type="match status" value="2"/>
</dbReference>
<dbReference type="SMART" id="SM00663">
    <property type="entry name" value="RPOLA_N"/>
    <property type="match status" value="1"/>
</dbReference>
<dbReference type="SUPFAM" id="SSF64484">
    <property type="entry name" value="beta and beta-prime subunits of DNA dependent RNA-polymerase"/>
    <property type="match status" value="1"/>
</dbReference>
<reference key="1">
    <citation type="journal article" date="2002" name="Mol. Biol. Evol.">
        <title>The plastid chromosome of Atropa belladonna and its comparison with that of Nicotiana tabacum: the role of RNA editing in generating divergence in the process of plant speciation.</title>
        <authorList>
            <person name="Schmitz-Linneweber C."/>
            <person name="Regel R."/>
            <person name="Du T.G."/>
            <person name="Hupfer H."/>
            <person name="Herrmann R.G."/>
            <person name="Maier R.M."/>
        </authorList>
    </citation>
    <scope>NUCLEOTIDE SEQUENCE [LARGE SCALE GENOMIC DNA]</scope>
    <source>
        <strain>cv. Ab5p(kan)</strain>
    </source>
</reference>
<feature type="chain" id="PRO_0000067863" description="DNA-directed RNA polymerase subunit beta'">
    <location>
        <begin position="1"/>
        <end position="681"/>
    </location>
</feature>
<feature type="binding site" evidence="1">
    <location>
        <position position="69"/>
    </location>
    <ligand>
        <name>Zn(2+)</name>
        <dbReference type="ChEBI" id="CHEBI:29105"/>
    </ligand>
</feature>
<feature type="binding site" evidence="1">
    <location>
        <position position="71"/>
    </location>
    <ligand>
        <name>Zn(2+)</name>
        <dbReference type="ChEBI" id="CHEBI:29105"/>
    </ligand>
</feature>
<feature type="binding site" evidence="1">
    <location>
        <position position="87"/>
    </location>
    <ligand>
        <name>Zn(2+)</name>
        <dbReference type="ChEBI" id="CHEBI:29105"/>
    </ligand>
</feature>
<feature type="binding site" evidence="1">
    <location>
        <position position="90"/>
    </location>
    <ligand>
        <name>Zn(2+)</name>
        <dbReference type="ChEBI" id="CHEBI:29105"/>
    </ligand>
</feature>
<feature type="binding site" evidence="1">
    <location>
        <position position="489"/>
    </location>
    <ligand>
        <name>Mg(2+)</name>
        <dbReference type="ChEBI" id="CHEBI:18420"/>
    </ligand>
</feature>
<feature type="binding site" evidence="1">
    <location>
        <position position="491"/>
    </location>
    <ligand>
        <name>Mg(2+)</name>
        <dbReference type="ChEBI" id="CHEBI:18420"/>
    </ligand>
</feature>
<feature type="binding site" evidence="1">
    <location>
        <position position="493"/>
    </location>
    <ligand>
        <name>Mg(2+)</name>
        <dbReference type="ChEBI" id="CHEBI:18420"/>
    </ligand>
</feature>
<keyword id="KW-0150">Chloroplast</keyword>
<keyword id="KW-0240">DNA-directed RNA polymerase</keyword>
<keyword id="KW-0460">Magnesium</keyword>
<keyword id="KW-0479">Metal-binding</keyword>
<keyword id="KW-0548">Nucleotidyltransferase</keyword>
<keyword id="KW-0934">Plastid</keyword>
<keyword id="KW-0804">Transcription</keyword>
<keyword id="KW-0808">Transferase</keyword>
<keyword id="KW-0862">Zinc</keyword>
<proteinExistence type="inferred from homology"/>
<gene>
    <name evidence="1" type="primary">rpoC1</name>
</gene>
<geneLocation type="chloroplast"/>
<protein>
    <recommendedName>
        <fullName evidence="1">DNA-directed RNA polymerase subunit beta'</fullName>
        <ecNumber evidence="1">2.7.7.6</ecNumber>
    </recommendedName>
    <alternativeName>
        <fullName evidence="1">PEP</fullName>
    </alternativeName>
    <alternativeName>
        <fullName evidence="1">Plastid-encoded RNA polymerase subunit beta'</fullName>
        <shortName evidence="1">RNA polymerase subunit beta'</shortName>
    </alternativeName>
</protein>